<accession>Q11IJ5</accession>
<proteinExistence type="inferred from homology"/>
<reference key="1">
    <citation type="submission" date="2006-06" db="EMBL/GenBank/DDBJ databases">
        <title>Complete sequence of chromosome of Mesorhizobium sp. BNC1.</title>
        <authorList>
            <consortium name="US DOE Joint Genome Institute"/>
            <person name="Copeland A."/>
            <person name="Lucas S."/>
            <person name="Lapidus A."/>
            <person name="Barry K."/>
            <person name="Detter J.C."/>
            <person name="Glavina del Rio T."/>
            <person name="Hammon N."/>
            <person name="Israni S."/>
            <person name="Dalin E."/>
            <person name="Tice H."/>
            <person name="Pitluck S."/>
            <person name="Chertkov O."/>
            <person name="Brettin T."/>
            <person name="Bruce D."/>
            <person name="Han C."/>
            <person name="Tapia R."/>
            <person name="Gilna P."/>
            <person name="Schmutz J."/>
            <person name="Larimer F."/>
            <person name="Land M."/>
            <person name="Hauser L."/>
            <person name="Kyrpides N."/>
            <person name="Mikhailova N."/>
            <person name="Richardson P."/>
        </authorList>
    </citation>
    <scope>NUCLEOTIDE SEQUENCE [LARGE SCALE GENOMIC DNA]</scope>
    <source>
        <strain>BNC1</strain>
    </source>
</reference>
<organism>
    <name type="scientific">Chelativorans sp. (strain BNC1)</name>
    <dbReference type="NCBI Taxonomy" id="266779"/>
    <lineage>
        <taxon>Bacteria</taxon>
        <taxon>Pseudomonadati</taxon>
        <taxon>Pseudomonadota</taxon>
        <taxon>Alphaproteobacteria</taxon>
        <taxon>Hyphomicrobiales</taxon>
        <taxon>Phyllobacteriaceae</taxon>
        <taxon>Chelativorans</taxon>
    </lineage>
</organism>
<evidence type="ECO:0000255" key="1">
    <source>
        <dbReference type="HAMAP-Rule" id="MF_00040"/>
    </source>
</evidence>
<keyword id="KW-0963">Cytoplasm</keyword>
<keyword id="KW-0648">Protein biosynthesis</keyword>
<dbReference type="EMBL" id="CP000390">
    <property type="protein sequence ID" value="ABG62780.1"/>
    <property type="molecule type" value="Genomic_DNA"/>
</dbReference>
<dbReference type="SMR" id="Q11IJ5"/>
<dbReference type="STRING" id="266779.Meso_1384"/>
<dbReference type="KEGG" id="mes:Meso_1384"/>
<dbReference type="eggNOG" id="COG0233">
    <property type="taxonomic scope" value="Bacteria"/>
</dbReference>
<dbReference type="HOGENOM" id="CLU_073981_2_0_5"/>
<dbReference type="OrthoDB" id="9804006at2"/>
<dbReference type="GO" id="GO:0005829">
    <property type="term" value="C:cytosol"/>
    <property type="evidence" value="ECO:0007669"/>
    <property type="project" value="GOC"/>
</dbReference>
<dbReference type="GO" id="GO:0043023">
    <property type="term" value="F:ribosomal large subunit binding"/>
    <property type="evidence" value="ECO:0007669"/>
    <property type="project" value="TreeGrafter"/>
</dbReference>
<dbReference type="GO" id="GO:0002184">
    <property type="term" value="P:cytoplasmic translational termination"/>
    <property type="evidence" value="ECO:0007669"/>
    <property type="project" value="TreeGrafter"/>
</dbReference>
<dbReference type="CDD" id="cd00520">
    <property type="entry name" value="RRF"/>
    <property type="match status" value="1"/>
</dbReference>
<dbReference type="FunFam" id="1.10.132.20:FF:000001">
    <property type="entry name" value="Ribosome-recycling factor"/>
    <property type="match status" value="1"/>
</dbReference>
<dbReference type="FunFam" id="3.30.1360.40:FF:000001">
    <property type="entry name" value="Ribosome-recycling factor"/>
    <property type="match status" value="1"/>
</dbReference>
<dbReference type="Gene3D" id="3.30.1360.40">
    <property type="match status" value="1"/>
</dbReference>
<dbReference type="Gene3D" id="1.10.132.20">
    <property type="entry name" value="Ribosome-recycling factor"/>
    <property type="match status" value="1"/>
</dbReference>
<dbReference type="HAMAP" id="MF_00040">
    <property type="entry name" value="RRF"/>
    <property type="match status" value="1"/>
</dbReference>
<dbReference type="InterPro" id="IPR002661">
    <property type="entry name" value="Ribosome_recyc_fac"/>
</dbReference>
<dbReference type="InterPro" id="IPR023584">
    <property type="entry name" value="Ribosome_recyc_fac_dom"/>
</dbReference>
<dbReference type="InterPro" id="IPR036191">
    <property type="entry name" value="RRF_sf"/>
</dbReference>
<dbReference type="NCBIfam" id="TIGR00496">
    <property type="entry name" value="frr"/>
    <property type="match status" value="1"/>
</dbReference>
<dbReference type="PANTHER" id="PTHR20982:SF3">
    <property type="entry name" value="MITOCHONDRIAL RIBOSOME RECYCLING FACTOR PSEUDO 1"/>
    <property type="match status" value="1"/>
</dbReference>
<dbReference type="PANTHER" id="PTHR20982">
    <property type="entry name" value="RIBOSOME RECYCLING FACTOR"/>
    <property type="match status" value="1"/>
</dbReference>
<dbReference type="Pfam" id="PF01765">
    <property type="entry name" value="RRF"/>
    <property type="match status" value="1"/>
</dbReference>
<dbReference type="SUPFAM" id="SSF55194">
    <property type="entry name" value="Ribosome recycling factor, RRF"/>
    <property type="match status" value="1"/>
</dbReference>
<protein>
    <recommendedName>
        <fullName evidence="1">Ribosome-recycling factor</fullName>
        <shortName evidence="1">RRF</shortName>
    </recommendedName>
    <alternativeName>
        <fullName evidence="1">Ribosome-releasing factor</fullName>
    </alternativeName>
</protein>
<feature type="chain" id="PRO_1000003194" description="Ribosome-recycling factor">
    <location>
        <begin position="1"/>
        <end position="186"/>
    </location>
</feature>
<comment type="function">
    <text evidence="1">Responsible for the release of ribosomes from messenger RNA at the termination of protein biosynthesis. May increase the efficiency of translation by recycling ribosomes from one round of translation to another.</text>
</comment>
<comment type="subcellular location">
    <subcellularLocation>
        <location evidence="1">Cytoplasm</location>
    </subcellularLocation>
</comment>
<comment type="similarity">
    <text evidence="1">Belongs to the RRF family.</text>
</comment>
<name>RRF_CHESB</name>
<sequence length="186" mass="20747">MPDGIDFKDLHRRFDGAIAAFKHDIASLRTGRASANLLDPIHVDAYGASMPVNQVATVSVPEPRMISVSVWDQSLVGAVDRAIREANLGFNPIVEGSTLRIPLPELNEERRKELVKIAHQYAEHARVAARHVRRDGMEHLKKAEKDGEISQDEARVQSDRVQKMTDETIAAIDKLLAEKEVEILQV</sequence>
<gene>
    <name evidence="1" type="primary">frr</name>
    <name type="ordered locus">Meso_1384</name>
</gene>